<gene>
    <name evidence="1" type="primary">rsmA</name>
    <name evidence="1" type="synonym">ksgA</name>
    <name type="ordered locus">Hac_0113</name>
</gene>
<evidence type="ECO:0000255" key="1">
    <source>
        <dbReference type="HAMAP-Rule" id="MF_00607"/>
    </source>
</evidence>
<comment type="function">
    <text evidence="1">Specifically dimethylates two adjacent adenosines (A1518 and A1519) in the loop of a conserved hairpin near the 3'-end of 16S rRNA in the 30S particle. May play a critical role in biogenesis of 30S subunits.</text>
</comment>
<comment type="catalytic activity">
    <reaction evidence="1">
        <text>adenosine(1518)/adenosine(1519) in 16S rRNA + 4 S-adenosyl-L-methionine = N(6)-dimethyladenosine(1518)/N(6)-dimethyladenosine(1519) in 16S rRNA + 4 S-adenosyl-L-homocysteine + 4 H(+)</text>
        <dbReference type="Rhea" id="RHEA:19609"/>
        <dbReference type="Rhea" id="RHEA-COMP:10232"/>
        <dbReference type="Rhea" id="RHEA-COMP:10233"/>
        <dbReference type="ChEBI" id="CHEBI:15378"/>
        <dbReference type="ChEBI" id="CHEBI:57856"/>
        <dbReference type="ChEBI" id="CHEBI:59789"/>
        <dbReference type="ChEBI" id="CHEBI:74411"/>
        <dbReference type="ChEBI" id="CHEBI:74493"/>
        <dbReference type="EC" id="2.1.1.182"/>
    </reaction>
</comment>
<comment type="subcellular location">
    <subcellularLocation>
        <location evidence="1">Cytoplasm</location>
    </subcellularLocation>
</comment>
<comment type="similarity">
    <text evidence="1">Belongs to the class I-like SAM-binding methyltransferase superfamily. rRNA adenine N(6)-methyltransferase family. RsmA subfamily.</text>
</comment>
<proteinExistence type="inferred from homology"/>
<organism>
    <name type="scientific">Helicobacter acinonychis (strain Sheeba)</name>
    <dbReference type="NCBI Taxonomy" id="382638"/>
    <lineage>
        <taxon>Bacteria</taxon>
        <taxon>Pseudomonadati</taxon>
        <taxon>Campylobacterota</taxon>
        <taxon>Epsilonproteobacteria</taxon>
        <taxon>Campylobacterales</taxon>
        <taxon>Helicobacteraceae</taxon>
        <taxon>Helicobacter</taxon>
    </lineage>
</organism>
<dbReference type="EC" id="2.1.1.182" evidence="1"/>
<dbReference type="EMBL" id="AM260522">
    <property type="protein sequence ID" value="CAJ98967.1"/>
    <property type="molecule type" value="Genomic_DNA"/>
</dbReference>
<dbReference type="RefSeq" id="WP_011577089.1">
    <property type="nucleotide sequence ID" value="NC_008229.1"/>
</dbReference>
<dbReference type="SMR" id="Q17ZF9"/>
<dbReference type="STRING" id="382638.Hac_0113"/>
<dbReference type="GeneID" id="31757647"/>
<dbReference type="KEGG" id="hac:Hac_0113"/>
<dbReference type="eggNOG" id="COG0030">
    <property type="taxonomic scope" value="Bacteria"/>
</dbReference>
<dbReference type="HOGENOM" id="CLU_041220_0_2_7"/>
<dbReference type="OrthoDB" id="9814755at2"/>
<dbReference type="BioCyc" id="HACI382638:HAC_RS00485-MONOMER"/>
<dbReference type="Proteomes" id="UP000000775">
    <property type="component" value="Chromosome"/>
</dbReference>
<dbReference type="GO" id="GO:0005829">
    <property type="term" value="C:cytosol"/>
    <property type="evidence" value="ECO:0007669"/>
    <property type="project" value="TreeGrafter"/>
</dbReference>
<dbReference type="GO" id="GO:0052908">
    <property type="term" value="F:16S rRNA (adenine(1518)-N(6)/adenine(1519)-N(6))-dimethyltransferase activity"/>
    <property type="evidence" value="ECO:0007669"/>
    <property type="project" value="UniProtKB-EC"/>
</dbReference>
<dbReference type="GO" id="GO:0003723">
    <property type="term" value="F:RNA binding"/>
    <property type="evidence" value="ECO:0007669"/>
    <property type="project" value="UniProtKB-KW"/>
</dbReference>
<dbReference type="Gene3D" id="1.10.8.100">
    <property type="entry name" value="Ribosomal RNA adenine dimethylase-like, domain 2"/>
    <property type="match status" value="1"/>
</dbReference>
<dbReference type="Gene3D" id="3.40.50.150">
    <property type="entry name" value="Vaccinia Virus protein VP39"/>
    <property type="match status" value="1"/>
</dbReference>
<dbReference type="HAMAP" id="MF_00607">
    <property type="entry name" value="16SrRNA_methyltr_A"/>
    <property type="match status" value="1"/>
</dbReference>
<dbReference type="InterPro" id="IPR001737">
    <property type="entry name" value="KsgA/Erm"/>
</dbReference>
<dbReference type="InterPro" id="IPR023165">
    <property type="entry name" value="rRNA_Ade_diMease-like_C"/>
</dbReference>
<dbReference type="InterPro" id="IPR020596">
    <property type="entry name" value="rRNA_Ade_Mease_Trfase_CS"/>
</dbReference>
<dbReference type="InterPro" id="IPR020598">
    <property type="entry name" value="rRNA_Ade_methylase_Trfase_N"/>
</dbReference>
<dbReference type="InterPro" id="IPR011530">
    <property type="entry name" value="rRNA_adenine_dimethylase"/>
</dbReference>
<dbReference type="InterPro" id="IPR029063">
    <property type="entry name" value="SAM-dependent_MTases_sf"/>
</dbReference>
<dbReference type="NCBIfam" id="TIGR00755">
    <property type="entry name" value="ksgA"/>
    <property type="match status" value="1"/>
</dbReference>
<dbReference type="PANTHER" id="PTHR11727">
    <property type="entry name" value="DIMETHYLADENOSINE TRANSFERASE"/>
    <property type="match status" value="1"/>
</dbReference>
<dbReference type="PANTHER" id="PTHR11727:SF7">
    <property type="entry name" value="DIMETHYLADENOSINE TRANSFERASE-RELATED"/>
    <property type="match status" value="1"/>
</dbReference>
<dbReference type="Pfam" id="PF00398">
    <property type="entry name" value="RrnaAD"/>
    <property type="match status" value="1"/>
</dbReference>
<dbReference type="SMART" id="SM00650">
    <property type="entry name" value="rADc"/>
    <property type="match status" value="1"/>
</dbReference>
<dbReference type="SUPFAM" id="SSF53335">
    <property type="entry name" value="S-adenosyl-L-methionine-dependent methyltransferases"/>
    <property type="match status" value="1"/>
</dbReference>
<dbReference type="PROSITE" id="PS01131">
    <property type="entry name" value="RRNA_A_DIMETH"/>
    <property type="match status" value="1"/>
</dbReference>
<dbReference type="PROSITE" id="PS51689">
    <property type="entry name" value="SAM_RNA_A_N6_MT"/>
    <property type="match status" value="1"/>
</dbReference>
<reference key="1">
    <citation type="journal article" date="2006" name="PLoS Genet.">
        <title>Who ate whom? Adaptive Helicobacter genomic changes that accompanied a host jump from early humans to large felines.</title>
        <authorList>
            <person name="Eppinger M."/>
            <person name="Baar C."/>
            <person name="Linz B."/>
            <person name="Raddatz G."/>
            <person name="Lanz C."/>
            <person name="Keller H."/>
            <person name="Morelli G."/>
            <person name="Gressmann H."/>
            <person name="Achtman M."/>
            <person name="Schuster S.C."/>
        </authorList>
    </citation>
    <scope>NUCLEOTIDE SEQUENCE [LARGE SCALE GENOMIC DNA]</scope>
    <source>
        <strain>Sheeba</strain>
    </source>
</reference>
<accession>Q17ZF9</accession>
<name>RSMA_HELAH</name>
<keyword id="KW-0963">Cytoplasm</keyword>
<keyword id="KW-0489">Methyltransferase</keyword>
<keyword id="KW-0694">RNA-binding</keyword>
<keyword id="KW-0698">rRNA processing</keyword>
<keyword id="KW-0949">S-adenosyl-L-methionine</keyword>
<keyword id="KW-0808">Transferase</keyword>
<feature type="chain" id="PRO_1000056627" description="Ribosomal RNA small subunit methyltransferase A">
    <location>
        <begin position="1"/>
        <end position="271"/>
    </location>
</feature>
<feature type="binding site" evidence="1">
    <location>
        <position position="11"/>
    </location>
    <ligand>
        <name>S-adenosyl-L-methionine</name>
        <dbReference type="ChEBI" id="CHEBI:59789"/>
    </ligand>
</feature>
<feature type="binding site" evidence="1">
    <location>
        <position position="13"/>
    </location>
    <ligand>
        <name>S-adenosyl-L-methionine</name>
        <dbReference type="ChEBI" id="CHEBI:59789"/>
    </ligand>
</feature>
<feature type="binding site" evidence="1">
    <location>
        <position position="38"/>
    </location>
    <ligand>
        <name>S-adenosyl-L-methionine</name>
        <dbReference type="ChEBI" id="CHEBI:59789"/>
    </ligand>
</feature>
<feature type="binding site" evidence="1">
    <location>
        <position position="58"/>
    </location>
    <ligand>
        <name>S-adenosyl-L-methionine</name>
        <dbReference type="ChEBI" id="CHEBI:59789"/>
    </ligand>
</feature>
<feature type="binding site" evidence="1">
    <location>
        <position position="86"/>
    </location>
    <ligand>
        <name>S-adenosyl-L-methionine</name>
        <dbReference type="ChEBI" id="CHEBI:59789"/>
    </ligand>
</feature>
<feature type="binding site" evidence="1">
    <location>
        <position position="101"/>
    </location>
    <ligand>
        <name>S-adenosyl-L-methionine</name>
        <dbReference type="ChEBI" id="CHEBI:59789"/>
    </ligand>
</feature>
<sequence>MVVAKKSLGQHFLTDESFLDRIVSALPPLNSLRLIEIGVGLGDLTLKLLDRYPLKTYEIDSSLCEKMRERLKKQKKPFELELAEKDALFLKEEEPYFLISNLPYYIATRLVLNAFKDPKCRGLLVMTQKEVALKFCTKDSQNALSVLAHAIGNVTLLFDVPPSAFSPSPKVFSSMFEVIKEPLKEKALASLIPTLSFEEALQKGFETLEDFLKACFSSPRKTLSNNLKKSVSYKEKLDKVLDFLALENQPTSVRASEIQDYLKLLKYLLKG</sequence>
<protein>
    <recommendedName>
        <fullName evidence="1">Ribosomal RNA small subunit methyltransferase A</fullName>
        <ecNumber evidence="1">2.1.1.182</ecNumber>
    </recommendedName>
    <alternativeName>
        <fullName evidence="1">16S rRNA (adenine(1518)-N(6)/adenine(1519)-N(6))-dimethyltransferase</fullName>
    </alternativeName>
    <alternativeName>
        <fullName evidence="1">16S rRNA dimethyladenosine transferase</fullName>
    </alternativeName>
    <alternativeName>
        <fullName evidence="1">16S rRNA dimethylase</fullName>
    </alternativeName>
    <alternativeName>
        <fullName evidence="1">S-adenosylmethionine-6-N', N'-adenosyl(rRNA) dimethyltransferase</fullName>
    </alternativeName>
</protein>